<organism>
    <name type="scientific">Eremothecium gossypii (strain ATCC 10895 / CBS 109.51 / FGSC 9923 / NRRL Y-1056)</name>
    <name type="common">Yeast</name>
    <name type="synonym">Ashbya gossypii</name>
    <dbReference type="NCBI Taxonomy" id="284811"/>
    <lineage>
        <taxon>Eukaryota</taxon>
        <taxon>Fungi</taxon>
        <taxon>Dikarya</taxon>
        <taxon>Ascomycota</taxon>
        <taxon>Saccharomycotina</taxon>
        <taxon>Saccharomycetes</taxon>
        <taxon>Saccharomycetales</taxon>
        <taxon>Saccharomycetaceae</taxon>
        <taxon>Eremothecium</taxon>
    </lineage>
</organism>
<feature type="chain" id="PRO_0000207736" description="Calpain-like protease palB/RIM13">
    <location>
        <begin position="1"/>
        <end position="694"/>
    </location>
</feature>
<feature type="domain" description="Calpain catalytic">
    <location>
        <begin position="80"/>
        <end position="320"/>
    </location>
</feature>
<feature type="active site" evidence="1">
    <location>
        <position position="135"/>
    </location>
</feature>
<feature type="active site" evidence="1">
    <location>
        <position position="276"/>
    </location>
</feature>
<evidence type="ECO:0000250" key="1"/>
<evidence type="ECO:0000305" key="2"/>
<dbReference type="EC" id="3.4.22.-"/>
<dbReference type="EMBL" id="AE016817">
    <property type="protein sequence ID" value="AAS52194.2"/>
    <property type="molecule type" value="Genomic_DNA"/>
</dbReference>
<dbReference type="RefSeq" id="NP_984370.2">
    <property type="nucleotide sequence ID" value="NM_209723.2"/>
</dbReference>
<dbReference type="SMR" id="Q759K3"/>
<dbReference type="FunCoup" id="Q759K3">
    <property type="interactions" value="36"/>
</dbReference>
<dbReference type="STRING" id="284811.Q759K3"/>
<dbReference type="EnsemblFungi" id="AAS52194">
    <property type="protein sequence ID" value="AAS52194"/>
    <property type="gene ID" value="AGOS_ADR274C"/>
</dbReference>
<dbReference type="GeneID" id="4620532"/>
<dbReference type="KEGG" id="ago:AGOS_ADR274C"/>
<dbReference type="eggNOG" id="KOG0045">
    <property type="taxonomic scope" value="Eukaryota"/>
</dbReference>
<dbReference type="HOGENOM" id="CLU_395483_0_0_1"/>
<dbReference type="InParanoid" id="Q759K3"/>
<dbReference type="OrthoDB" id="167576at2759"/>
<dbReference type="Proteomes" id="UP000000591">
    <property type="component" value="Chromosome IV"/>
</dbReference>
<dbReference type="GO" id="GO:0004197">
    <property type="term" value="F:cysteine-type endopeptidase activity"/>
    <property type="evidence" value="ECO:0000318"/>
    <property type="project" value="GO_Central"/>
</dbReference>
<dbReference type="GO" id="GO:0006508">
    <property type="term" value="P:proteolysis"/>
    <property type="evidence" value="ECO:0000318"/>
    <property type="project" value="GO_Central"/>
</dbReference>
<dbReference type="InterPro" id="IPR051297">
    <property type="entry name" value="PalB/RIM13_Calpain-like"/>
</dbReference>
<dbReference type="InterPro" id="IPR038765">
    <property type="entry name" value="Papain-like_cys_pep_sf"/>
</dbReference>
<dbReference type="PANTHER" id="PTHR46143">
    <property type="entry name" value="CALPAIN-7"/>
    <property type="match status" value="1"/>
</dbReference>
<dbReference type="PANTHER" id="PTHR46143:SF1">
    <property type="entry name" value="CALPAIN-7"/>
    <property type="match status" value="1"/>
</dbReference>
<dbReference type="SUPFAM" id="SSF54001">
    <property type="entry name" value="Cysteine proteinases"/>
    <property type="match status" value="1"/>
</dbReference>
<name>PALB_EREGS</name>
<gene>
    <name type="primary">RIM13</name>
    <name type="ordered locus">ADR274C</name>
</gene>
<accession>Q759K3</accession>
<proteinExistence type="inferred from homology"/>
<comment type="function">
    <text evidence="1">Required for the proteolytic cleavage of the transcription factor RIM101 in response to alkaline ambient pH.</text>
</comment>
<comment type="similarity">
    <text evidence="2">Belongs to the peptidase C2 family. PalB/RIM13 subfamily.</text>
</comment>
<comment type="caution">
    <text evidence="2">Lacks the conserved Asn residue of the catalytic triad in position 292, which is replaced by an Asp residue.</text>
</comment>
<protein>
    <recommendedName>
        <fullName>Calpain-like protease palB/RIM13</fullName>
        <ecNumber>3.4.22.-</ecNumber>
    </recommendedName>
    <alternativeName>
        <fullName>Cysteine protease RIM13</fullName>
    </alternativeName>
</protein>
<keyword id="KW-0378">Hydrolase</keyword>
<keyword id="KW-0645">Protease</keyword>
<keyword id="KW-1185">Reference proteome</keyword>
<keyword id="KW-0788">Thiol protease</keyword>
<sequence>MEALLAVEETGNDLWKELKELYWAQYVQNSVDKVQFERYVRKVKSADDYWLVRALLAFSDSRKACTFNSRFEWLTMQAHGRQYPPLASKDAGKLIWNARREFRYAEPQQAAYKQLARPRGDAVADIQQHPDLGNCSMVCALINVKRTCGTADMVADCGDVAQVNLFFNGARRLVTLHRAEVRQNMRREQLAVLSPDMHDKLIEQAYFEVAHGMNYESMGSNTAMDTYMLCGWFPLVVETSEVDFPFVQRYLARGAMLALGTHATRTIDSFCLRKNHDYAVLDVCGTVFRIRDPLVAGNVIELAWEDVRTAFHLLYINWDAHTQCQLYEKFHFRYNSAVHNRFMSWLNKPTYRVVNDTESELPVYALFERHLSNRKYDNSIVGVISGENLVSDTEEGNNIGMQWVELTVPPHSSRILFYHSNTNTNCTLHLFSNSPRLKVAKWSSAESSRLAVLDGCWQPISKNLTFTHWPAFKFEIKHPETDGVHVSLQFCWANEHSAALFIYHASDYRYEKPLLHRPGPLPFPQAFFELALDTNTPYVVLCQSMDVGADAAFQLAIQTEKQGSVISTVPTSRAYGGLRFHTSKLVSTAAKRIELPFKVSRSTDLHITLYSKSSPLVLKCAVFSDGSDEAITATPGFVPINDYPYVLPITFAKERSLVLLIELQDTVPDSTVTIEIGSNCAFNFCGHDVDLARV</sequence>
<reference key="1">
    <citation type="journal article" date="2004" name="Science">
        <title>The Ashbya gossypii genome as a tool for mapping the ancient Saccharomyces cerevisiae genome.</title>
        <authorList>
            <person name="Dietrich F.S."/>
            <person name="Voegeli S."/>
            <person name="Brachat S."/>
            <person name="Lerch A."/>
            <person name="Gates K."/>
            <person name="Steiner S."/>
            <person name="Mohr C."/>
            <person name="Poehlmann R."/>
            <person name="Luedi P."/>
            <person name="Choi S."/>
            <person name="Wing R.A."/>
            <person name="Flavier A."/>
            <person name="Gaffney T.D."/>
            <person name="Philippsen P."/>
        </authorList>
    </citation>
    <scope>NUCLEOTIDE SEQUENCE [LARGE SCALE GENOMIC DNA]</scope>
    <source>
        <strain>ATCC 10895 / CBS 109.51 / FGSC 9923 / NRRL Y-1056</strain>
    </source>
</reference>
<reference key="2">
    <citation type="journal article" date="2013" name="G3 (Bethesda)">
        <title>Genomes of Ashbya fungi isolated from insects reveal four mating-type loci, numerous translocations, lack of transposons, and distinct gene duplications.</title>
        <authorList>
            <person name="Dietrich F.S."/>
            <person name="Voegeli S."/>
            <person name="Kuo S."/>
            <person name="Philippsen P."/>
        </authorList>
    </citation>
    <scope>GENOME REANNOTATION</scope>
    <scope>SEQUENCE REVISION TO 235-236; 238; 269 AND 273</scope>
    <source>
        <strain>ATCC 10895 / CBS 109.51 / FGSC 9923 / NRRL Y-1056</strain>
    </source>
</reference>